<dbReference type="EMBL" id="BC070566">
    <property type="protein sequence ID" value="AAH70566.1"/>
    <property type="molecule type" value="mRNA"/>
</dbReference>
<dbReference type="RefSeq" id="NP_001084947.1">
    <property type="nucleotide sequence ID" value="NM_001091478.1"/>
</dbReference>
<dbReference type="SMR" id="Q6NRY9"/>
<dbReference type="DNASU" id="432005"/>
<dbReference type="GeneID" id="432005"/>
<dbReference type="KEGG" id="xla:432005"/>
<dbReference type="AGR" id="Xenbase:XB-GENE-6256299"/>
<dbReference type="CTD" id="432005"/>
<dbReference type="Xenbase" id="XB-GENE-6256299">
    <property type="gene designation" value="ywhag.S"/>
</dbReference>
<dbReference type="OMA" id="DSTQCES"/>
<dbReference type="OrthoDB" id="10260625at2759"/>
<dbReference type="Proteomes" id="UP000186698">
    <property type="component" value="Chromosome 2S"/>
</dbReference>
<dbReference type="Bgee" id="432005">
    <property type="expression patterns" value="Expressed in brain and 19 other cell types or tissues"/>
</dbReference>
<dbReference type="GO" id="GO:0005737">
    <property type="term" value="C:cytoplasm"/>
    <property type="evidence" value="ECO:0000318"/>
    <property type="project" value="GO_Central"/>
</dbReference>
<dbReference type="GO" id="GO:0140031">
    <property type="term" value="F:phosphorylation-dependent protein binding"/>
    <property type="evidence" value="ECO:0000250"/>
    <property type="project" value="UniProtKB"/>
</dbReference>
<dbReference type="GO" id="GO:0005080">
    <property type="term" value="F:protein kinase C binding"/>
    <property type="evidence" value="ECO:0000318"/>
    <property type="project" value="GO_Central"/>
</dbReference>
<dbReference type="GO" id="GO:0140311">
    <property type="term" value="F:protein sequestering activity"/>
    <property type="evidence" value="ECO:0000250"/>
    <property type="project" value="UniProtKB"/>
</dbReference>
<dbReference type="GO" id="GO:0008104">
    <property type="term" value="P:protein localization"/>
    <property type="evidence" value="ECO:0000318"/>
    <property type="project" value="GO_Central"/>
</dbReference>
<dbReference type="GO" id="GO:0007165">
    <property type="term" value="P:signal transduction"/>
    <property type="evidence" value="ECO:0000318"/>
    <property type="project" value="GO_Central"/>
</dbReference>
<dbReference type="CDD" id="cd10024">
    <property type="entry name" value="14-3-3_gamma"/>
    <property type="match status" value="1"/>
</dbReference>
<dbReference type="FunFam" id="1.20.190.20:FF:000001">
    <property type="entry name" value="14-3-3 gamma 1"/>
    <property type="match status" value="1"/>
</dbReference>
<dbReference type="Gene3D" id="1.20.190.20">
    <property type="entry name" value="14-3-3 domain"/>
    <property type="match status" value="1"/>
</dbReference>
<dbReference type="InterPro" id="IPR000308">
    <property type="entry name" value="14-3-3"/>
</dbReference>
<dbReference type="InterPro" id="IPR023409">
    <property type="entry name" value="14-3-3_CS"/>
</dbReference>
<dbReference type="InterPro" id="IPR036815">
    <property type="entry name" value="14-3-3_dom_sf"/>
</dbReference>
<dbReference type="InterPro" id="IPR023410">
    <property type="entry name" value="14-3-3_domain"/>
</dbReference>
<dbReference type="PANTHER" id="PTHR18860">
    <property type="entry name" value="14-3-3 PROTEIN"/>
    <property type="match status" value="1"/>
</dbReference>
<dbReference type="Pfam" id="PF00244">
    <property type="entry name" value="14-3-3"/>
    <property type="match status" value="1"/>
</dbReference>
<dbReference type="PIRSF" id="PIRSF000868">
    <property type="entry name" value="14-3-3"/>
    <property type="match status" value="1"/>
</dbReference>
<dbReference type="PRINTS" id="PR00305">
    <property type="entry name" value="1433ZETA"/>
</dbReference>
<dbReference type="SMART" id="SM00101">
    <property type="entry name" value="14_3_3"/>
    <property type="match status" value="1"/>
</dbReference>
<dbReference type="SUPFAM" id="SSF48445">
    <property type="entry name" value="14-3-3 protein"/>
    <property type="match status" value="1"/>
</dbReference>
<dbReference type="PROSITE" id="PS00796">
    <property type="entry name" value="1433_1"/>
    <property type="match status" value="1"/>
</dbReference>
<dbReference type="PROSITE" id="PS00797">
    <property type="entry name" value="1433_2"/>
    <property type="match status" value="1"/>
</dbReference>
<comment type="function">
    <text evidence="1">Adapter protein implicated in the regulation of a large spectrum of both general and specialized signaling pathways. Binds to a large number of partners, usually by recognition of a phosphoserine or phosphothreonine motif. Binding generally results in the modulation of the activity of the binding partner.</text>
</comment>
<comment type="subunit">
    <text evidence="1">Homodimer, and heterodimer with other family members.</text>
</comment>
<comment type="subcellular location">
    <subcellularLocation>
        <location evidence="2">Cytoplasm</location>
    </subcellularLocation>
</comment>
<comment type="similarity">
    <text evidence="3">Belongs to the 14-3-3 family.</text>
</comment>
<evidence type="ECO:0000250" key="1">
    <source>
        <dbReference type="UniProtKB" id="P61981"/>
    </source>
</evidence>
<evidence type="ECO:0000250" key="2">
    <source>
        <dbReference type="UniProtKB" id="P68252"/>
    </source>
</evidence>
<evidence type="ECO:0000305" key="3"/>
<proteinExistence type="evidence at transcript level"/>
<sequence length="247" mass="28245">MVDREQLVQKARLAEQAERYDDMAAAMKAVTELNEALSNEERNLLSVAYKNVVGARRSSWRVISSIEQKTSADGNEKKIEMVRAYREKIEKELEAVCQDVLNLLDNFLIKNCSETQYESKVFYLKMKGDYYRYLAEVATGEKRATVVESSEKAYSEAHEISKEHMQPTHPIRLGLALNYSVFYYEIQNAPEQACHLAKTAFDDAIAELDTLNEDSYKDSTLIMQLLRDNLTLWTSDQQDDDGGEGNN</sequence>
<keyword id="KW-0963">Cytoplasm</keyword>
<keyword id="KW-1185">Reference proteome</keyword>
<reference key="1">
    <citation type="submission" date="2004-05" db="EMBL/GenBank/DDBJ databases">
        <authorList>
            <consortium name="NIH - Xenopus Gene Collection (XGC) project"/>
        </authorList>
    </citation>
    <scope>NUCLEOTIDE SEQUENCE [LARGE SCALE MRNA]</scope>
    <source>
        <tissue>Embryo</tissue>
    </source>
</reference>
<accession>Q6NRY9</accession>
<feature type="chain" id="PRO_0000058613" description="14-3-3 protein gamma-B">
    <location>
        <begin position="1"/>
        <end position="247"/>
    </location>
</feature>
<feature type="site" description="Interaction with phosphoserine on interacting protein" evidence="1">
    <location>
        <position position="57"/>
    </location>
</feature>
<feature type="site" description="Interaction with phosphoserine on interacting protein" evidence="1">
    <location>
        <position position="132"/>
    </location>
</feature>
<gene>
    <name type="primary">ywhag-b</name>
</gene>
<name>143GB_XENLA</name>
<organism>
    <name type="scientific">Xenopus laevis</name>
    <name type="common">African clawed frog</name>
    <dbReference type="NCBI Taxonomy" id="8355"/>
    <lineage>
        <taxon>Eukaryota</taxon>
        <taxon>Metazoa</taxon>
        <taxon>Chordata</taxon>
        <taxon>Craniata</taxon>
        <taxon>Vertebrata</taxon>
        <taxon>Euteleostomi</taxon>
        <taxon>Amphibia</taxon>
        <taxon>Batrachia</taxon>
        <taxon>Anura</taxon>
        <taxon>Pipoidea</taxon>
        <taxon>Pipidae</taxon>
        <taxon>Xenopodinae</taxon>
        <taxon>Xenopus</taxon>
        <taxon>Xenopus</taxon>
    </lineage>
</organism>
<protein>
    <recommendedName>
        <fullName>14-3-3 protein gamma-B</fullName>
    </recommendedName>
</protein>